<protein>
    <recommendedName>
        <fullName evidence="10">4-O-methyl-glucuronoyl methylesterase 1</fullName>
        <ecNumber evidence="6 7 8">3.1.1.117</ecNumber>
    </recommendedName>
    <alternativeName>
        <fullName evidence="9">Glucuronoyl esterase 1</fullName>
        <shortName evidence="9">GE1</shortName>
    </alternativeName>
</protein>
<accession>P0CT87</accession>
<comment type="function">
    <text evidence="6 7 8">Glucuronoyl esterase which may play a significant role in biomass degradation, as it is considered to disconnect hemicellulose from lignin through the hydrolysis of the ester bond between 4-O-methyl-D-glucuronic acid residues of glucuronoxylans and aromatic alcohols of lignin (PubMed:18854978, PubMed:19897892). Can hydrolyze benzyl glucuronic acid (BnGlcA), allyl glucuronic acid (allylGlcA) and to a lower degree methyl glucuronic acid (MeGlcA) in vitro (PubMed:28429057).</text>
</comment>
<comment type="catalytic activity">
    <reaction evidence="6 7 8">
        <text>a 4-O-methyl-alpha-D-glucuronosyl ester derivative + H2O = 4-O-methyl-alpha-D-glucuronate derivative + an alcohol + H(+)</text>
        <dbReference type="Rhea" id="RHEA:67452"/>
        <dbReference type="ChEBI" id="CHEBI:15377"/>
        <dbReference type="ChEBI" id="CHEBI:15378"/>
        <dbReference type="ChEBI" id="CHEBI:30879"/>
        <dbReference type="ChEBI" id="CHEBI:171667"/>
        <dbReference type="ChEBI" id="CHEBI:171668"/>
        <dbReference type="EC" id="3.1.1.117"/>
    </reaction>
    <physiologicalReaction direction="left-to-right" evidence="11 12 13">
        <dbReference type="Rhea" id="RHEA:67453"/>
    </physiologicalReaction>
</comment>
<comment type="biophysicochemical properties">
    <kinetics>
        <KM evidence="7">0.83 mM for 4-nitrophenyl 2-O-(methyl-4-O-methyl-alpha-D-glucopyranosyluronate)-beta-D-xylopyranoside</KM>
        <KM evidence="8">2.9 mM for benzyl glucuronic acid</KM>
        <Vmax evidence="7">14.2 umol/min/mg enzyme for 4-nitrophenyl 2-O-(methyl-4-O-methyl-alpha-D-glucopyranosyluronate)-beta-D-xylopyranoside</Vmax>
        <Vmax evidence="8">0.44 umol/min/mg enzyme for benzyl glucuronic acid</Vmax>
    </kinetics>
    <phDependence>
        <text evidence="7">Optimum pH is 5.0-6.0.</text>
    </phDependence>
    <temperatureDependence>
        <text evidence="7">Optimum temperature is 45-55 degrees Celsius.</text>
    </temperatureDependence>
</comment>
<comment type="subcellular location">
    <subcellularLocation>
        <location evidence="6">Secreted</location>
    </subcellularLocation>
</comment>
<comment type="similarity">
    <text evidence="10">Belongs to the carbohydrate esterase 15 (CE15) family.</text>
</comment>
<dbReference type="EC" id="3.1.1.117" evidence="6 7 8"/>
<dbReference type="EMBL" id="AADS01000169">
    <property type="status" value="NOT_ANNOTATED_CDS"/>
    <property type="molecule type" value="Genomic_DNA"/>
</dbReference>
<dbReference type="SMR" id="P0CT87"/>
<dbReference type="ESTHER" id="phacr-gce1">
    <property type="family name" value="Glucuronoyl_esterase"/>
</dbReference>
<dbReference type="BRENDA" id="3.1.1.117">
    <property type="organism ID" value="1380"/>
</dbReference>
<dbReference type="SABIO-RK" id="P0CT87"/>
<dbReference type="GO" id="GO:0005576">
    <property type="term" value="C:extracellular region"/>
    <property type="evidence" value="ECO:0007669"/>
    <property type="project" value="UniProtKB-SubCell"/>
</dbReference>
<dbReference type="GO" id="GO:0052689">
    <property type="term" value="F:carboxylic ester hydrolase activity"/>
    <property type="evidence" value="ECO:0007669"/>
    <property type="project" value="UniProtKB-KW"/>
</dbReference>
<dbReference type="GO" id="GO:0030248">
    <property type="term" value="F:cellulose binding"/>
    <property type="evidence" value="ECO:0007669"/>
    <property type="project" value="InterPro"/>
</dbReference>
<dbReference type="GO" id="GO:0005975">
    <property type="term" value="P:carbohydrate metabolic process"/>
    <property type="evidence" value="ECO:0007669"/>
    <property type="project" value="InterPro"/>
</dbReference>
<dbReference type="GO" id="GO:0046274">
    <property type="term" value="P:lignin catabolic process"/>
    <property type="evidence" value="ECO:0007669"/>
    <property type="project" value="UniProtKB-KW"/>
</dbReference>
<dbReference type="Gene3D" id="3.40.50.1820">
    <property type="entry name" value="alpha/beta hydrolase"/>
    <property type="match status" value="1"/>
</dbReference>
<dbReference type="InterPro" id="IPR029058">
    <property type="entry name" value="AB_hydrolase_fold"/>
</dbReference>
<dbReference type="InterPro" id="IPR035971">
    <property type="entry name" value="CBD_sf"/>
</dbReference>
<dbReference type="InterPro" id="IPR000254">
    <property type="entry name" value="Cellulose-bd_dom_fun"/>
</dbReference>
<dbReference type="InterPro" id="IPR054579">
    <property type="entry name" value="GCE-like_dom"/>
</dbReference>
<dbReference type="Pfam" id="PF00734">
    <property type="entry name" value="CBM_1"/>
    <property type="match status" value="1"/>
</dbReference>
<dbReference type="Pfam" id="PF22244">
    <property type="entry name" value="GCE_fung"/>
    <property type="match status" value="1"/>
</dbReference>
<dbReference type="SMART" id="SM00236">
    <property type="entry name" value="fCBD"/>
    <property type="match status" value="1"/>
</dbReference>
<dbReference type="SUPFAM" id="SSF53474">
    <property type="entry name" value="alpha/beta-Hydrolases"/>
    <property type="match status" value="1"/>
</dbReference>
<dbReference type="SUPFAM" id="SSF57180">
    <property type="entry name" value="Cellulose-binding domain"/>
    <property type="match status" value="1"/>
</dbReference>
<dbReference type="PROSITE" id="PS00562">
    <property type="entry name" value="CBM1_1"/>
    <property type="match status" value="1"/>
</dbReference>
<dbReference type="PROSITE" id="PS51164">
    <property type="entry name" value="CBM1_2"/>
    <property type="match status" value="1"/>
</dbReference>
<name>GCE1_PHACR</name>
<gene>
    <name type="ORF">e_gw1.18.61.1</name>
    <name type="ORF">e_gwh2.18.77.1</name>
</gene>
<organism>
    <name type="scientific">Phanerochaete chrysosporium (strain RP-78 / ATCC MYA-4764 / FGSC 9002)</name>
    <name type="common">White-rot fungus</name>
    <name type="synonym">Sporotrichum pruinosum</name>
    <dbReference type="NCBI Taxonomy" id="273507"/>
    <lineage>
        <taxon>Eukaryota</taxon>
        <taxon>Fungi</taxon>
        <taxon>Dikarya</taxon>
        <taxon>Basidiomycota</taxon>
        <taxon>Agaricomycotina</taxon>
        <taxon>Agaricomycetes</taxon>
        <taxon>Polyporales</taxon>
        <taxon>Phanerochaetaceae</taxon>
        <taxon>Phanerodontia</taxon>
        <taxon>Phanerodontia chrysosporium</taxon>
    </lineage>
</organism>
<reference key="1">
    <citation type="journal article" date="2004" name="Nat. Biotechnol.">
        <title>Genome sequence of the lignocellulose degrading fungus Phanerochaete chrysosporium strain RP78.</title>
        <authorList>
            <person name="Martinez D."/>
            <person name="Larrondo L.F."/>
            <person name="Putnam N."/>
            <person name="Gelpke M.D.S."/>
            <person name="Huang K."/>
            <person name="Chapman J."/>
            <person name="Helfenbein K.G."/>
            <person name="Ramaiya P."/>
            <person name="Detter J.C."/>
            <person name="Larimer F."/>
            <person name="Coutinho P.M."/>
            <person name="Henrissat B."/>
            <person name="Berka R."/>
            <person name="Cullen D."/>
            <person name="Rokhsar D."/>
        </authorList>
    </citation>
    <scope>NUCLEOTIDE SEQUENCE [LARGE SCALE GENOMIC DNA]</scope>
    <source>
        <strain>RP-78 / ATCC MYA-4764 / FGSC 9002</strain>
    </source>
</reference>
<reference key="2">
    <citation type="journal article" date="2006" name="Fungal Genet. Biol.">
        <title>Computational analysis of the Phanerochaete chrysosporium v2.0 genome database and mass spectrometry identification of peptides in ligninolytic cultures reveal complex mixtures of secreted proteins.</title>
        <authorList>
            <person name="Vanden Wymelenberg A."/>
            <person name="Minges P."/>
            <person name="Sabat G."/>
            <person name="Martinez D."/>
            <person name="Aerts A."/>
            <person name="Salamov A."/>
            <person name="Grigoriev I."/>
            <person name="Shapiro H."/>
            <person name="Putnam N."/>
            <person name="Belinky P."/>
            <person name="Dosoretz C."/>
            <person name="Gaskell J."/>
            <person name="Kersten P."/>
            <person name="Cullen D."/>
        </authorList>
    </citation>
    <scope>GENOME REANNOTATION</scope>
    <source>
        <strain>RP-78 / ATCC MYA-4764 / FGSC 9002</strain>
    </source>
</reference>
<reference key="3">
    <citation type="journal article" date="2014" name="Fungal Genet. Biol.">
        <title>Genomics of wood-degrading fungi.</title>
        <authorList>
            <person name="Ohm R.A."/>
            <person name="Riley R."/>
            <person name="Salamov A."/>
            <person name="Min B."/>
            <person name="Choi I.-G."/>
            <person name="Grigoriev I.V."/>
        </authorList>
    </citation>
    <scope>GENOME REANNOTATION</scope>
    <source>
        <strain>RP-78 / ATCC MYA-4764 / FGSC 9002</strain>
    </source>
</reference>
<reference key="4">
    <citation type="journal article" date="2009" name="Arch. Microbiol.">
        <title>Two glucuronoyl esterases of Phanerochaete chrysosporium.</title>
        <authorList>
            <person name="Duranova M."/>
            <person name="Spanikova S."/>
            <person name="Woesten H.A."/>
            <person name="Biely P."/>
            <person name="de Vries R.P."/>
        </authorList>
    </citation>
    <scope>FUNCTION</scope>
    <scope>CATALYTIC ACTIVITY</scope>
    <scope>SUBCELLULAR LOCATION</scope>
</reference>
<reference key="5">
    <citation type="journal article" date="2009" name="Biosci. Biotechnol. Biochem.">
        <title>Fungal glucuronoyl esterases and substrate uronic acid recognition.</title>
        <authorList>
            <person name="Duranova M."/>
            <person name="Hirsch J."/>
            <person name="Kolenova K."/>
            <person name="Biely P."/>
        </authorList>
    </citation>
    <scope>FUNCTION</scope>
    <scope>CATALYTIC ACTIVITY</scope>
    <scope>BIOPHYSICOCHEMICAL PROPERTIES</scope>
</reference>
<reference key="6">
    <citation type="journal article" date="2017" name="Appl. Microbiol. Biotechnol.">
        <title>Characterisation of three fungal glucuronoyl esterases on glucuronic acid ester model compounds.</title>
        <authorList>
            <person name="Huettner S."/>
            <person name="Klaubauf S."/>
            <person name="de Vries R.P."/>
            <person name="Olsson L."/>
        </authorList>
    </citation>
    <scope>FUNCTION</scope>
    <scope>CATALYTIC ACTIVITY</scope>
    <scope>BIOPHYSICOCHEMICAL PROPERTIES</scope>
</reference>
<feature type="signal peptide" evidence="2">
    <location>
        <begin position="1"/>
        <end position="20"/>
    </location>
</feature>
<feature type="chain" id="PRO_0000435847" description="4-O-methyl-glucuronoyl methylesterase 1">
    <location>
        <begin position="21"/>
        <end position="472"/>
    </location>
</feature>
<feature type="domain" description="CBM1" evidence="4">
    <location>
        <begin position="21"/>
        <end position="56"/>
    </location>
</feature>
<feature type="region of interest" description="Disordered" evidence="5">
    <location>
        <begin position="62"/>
        <end position="97"/>
    </location>
</feature>
<feature type="short sequence motif" description="GXSYXG catalytic site motif" evidence="1">
    <location>
        <begin position="282"/>
        <end position="287"/>
    </location>
</feature>
<feature type="compositionally biased region" description="Pro residues" evidence="5">
    <location>
        <begin position="63"/>
        <end position="72"/>
    </location>
</feature>
<feature type="compositionally biased region" description="Low complexity" evidence="5">
    <location>
        <begin position="73"/>
        <end position="96"/>
    </location>
</feature>
<feature type="active site" description="Nucleophile" evidence="1">
    <location>
        <position position="284"/>
    </location>
</feature>
<feature type="active site" description="Proton donor/acceptor" evidence="1">
    <location>
        <position position="418"/>
    </location>
</feature>
<feature type="binding site" evidence="1">
    <location>
        <position position="288"/>
    </location>
    <ligand>
        <name>substrate</name>
    </ligand>
</feature>
<feature type="binding site" evidence="1">
    <location>
        <position position="330"/>
    </location>
    <ligand>
        <name>substrate</name>
    </ligand>
</feature>
<feature type="binding site" evidence="1">
    <location>
        <position position="338"/>
    </location>
    <ligand>
        <name>substrate</name>
    </ligand>
</feature>
<feature type="binding site" evidence="1">
    <location>
        <position position="382"/>
    </location>
    <ligand>
        <name>substrate</name>
    </ligand>
</feature>
<feature type="glycosylation site" description="N-linked (GlcNAc...) asparagine" evidence="3">
    <location>
        <position position="465"/>
    </location>
</feature>
<feature type="disulfide bond" evidence="1">
    <location>
        <begin position="97"/>
        <end position="131"/>
    </location>
</feature>
<feature type="disulfide bond" evidence="1">
    <location>
        <begin position="283"/>
        <end position="419"/>
    </location>
</feature>
<feature type="disulfide bond" evidence="1">
    <location>
        <begin position="315"/>
        <end position="391"/>
    </location>
</feature>
<evidence type="ECO:0000250" key="1">
    <source>
        <dbReference type="UniProtKB" id="G2QJR6"/>
    </source>
</evidence>
<evidence type="ECO:0000255" key="2"/>
<evidence type="ECO:0000255" key="3">
    <source>
        <dbReference type="PROSITE-ProRule" id="PRU00498"/>
    </source>
</evidence>
<evidence type="ECO:0000255" key="4">
    <source>
        <dbReference type="PROSITE-ProRule" id="PRU00597"/>
    </source>
</evidence>
<evidence type="ECO:0000256" key="5">
    <source>
        <dbReference type="SAM" id="MobiDB-lite"/>
    </source>
</evidence>
<evidence type="ECO:0000269" key="6">
    <source>
    </source>
</evidence>
<evidence type="ECO:0000269" key="7">
    <source>
    </source>
</evidence>
<evidence type="ECO:0000269" key="8">
    <source>
    </source>
</evidence>
<evidence type="ECO:0000303" key="9">
    <source>
    </source>
</evidence>
<evidence type="ECO:0000305" key="10"/>
<evidence type="ECO:0000305" key="11">
    <source>
    </source>
</evidence>
<evidence type="ECO:0000305" key="12">
    <source>
    </source>
</evidence>
<evidence type="ECO:0000305" key="13">
    <source>
    </source>
</evidence>
<keyword id="KW-1015">Disulfide bond</keyword>
<keyword id="KW-0325">Glycoprotein</keyword>
<keyword id="KW-0378">Hydrolase</keyword>
<keyword id="KW-0439">Lignin degradation</keyword>
<keyword id="KW-0964">Secreted</keyword>
<keyword id="KW-0719">Serine esterase</keyword>
<keyword id="KW-0732">Signal</keyword>
<sequence length="472" mass="49192">MKSAAYLAALAAVLPAYVNAQAQEWGQCGGIGWTGATTCVSGTVCTVLNPYYSQCLPGTATTAPPPPPPPPTSVSSSSSSSTSSAPPSGPSGTSPTCSVASTIPGFSNAALPNPFVFNDGSPVQSKADFTCRQQQILALIQGYEAGALPGPPQSVTASFSKSGSTGTLSITVTDNGKSISFAPTISIPSGTPPANGWPLVIAFEGGSIPIPAGIAKLTYSNSDMAQQTDTSSRGKGLFYNLYGSGATASAMTAWAWGVSRIIDALEKTPSAQINTQRIAVTGCSRDGKGALMAGALEPRIALTIPQESGSGGDTCWRLSKAESDQGHQVQTATEIVTENVWFSTNFNNYVNNLNVLPYDHHMLMALVAPRALVSFENTDYTWLSPMSAWGCVNAAHTVFSALGVADHHGFAQVGGHAHCAWPDSLTPSLNAFFNRFLLDQNVDTNVFTTNNQFGGATWTQSSWINWSTPTLS</sequence>
<proteinExistence type="evidence at protein level"/>